<keyword id="KW-0028">Amino-acid biosynthesis</keyword>
<keyword id="KW-0963">Cytoplasm</keyword>
<keyword id="KW-0315">Glutamine amidotransferase</keyword>
<keyword id="KW-0368">Histidine biosynthesis</keyword>
<keyword id="KW-0378">Hydrolase</keyword>
<keyword id="KW-0456">Lyase</keyword>
<keyword id="KW-1185">Reference proteome</keyword>
<organism>
    <name type="scientific">Brucella abortus (strain 2308)</name>
    <dbReference type="NCBI Taxonomy" id="359391"/>
    <lineage>
        <taxon>Bacteria</taxon>
        <taxon>Pseudomonadati</taxon>
        <taxon>Pseudomonadota</taxon>
        <taxon>Alphaproteobacteria</taxon>
        <taxon>Hyphomicrobiales</taxon>
        <taxon>Brucellaceae</taxon>
        <taxon>Brucella/Ochrobactrum group</taxon>
        <taxon>Brucella</taxon>
    </lineage>
</organism>
<protein>
    <recommendedName>
        <fullName evidence="1">Imidazole glycerol phosphate synthase subunit HisH</fullName>
        <ecNumber evidence="1">4.3.2.10</ecNumber>
    </recommendedName>
    <alternativeName>
        <fullName evidence="1">IGP synthase glutaminase subunit</fullName>
        <ecNumber evidence="1">3.5.1.2</ecNumber>
    </alternativeName>
    <alternativeName>
        <fullName evidence="1">IGP synthase subunit HisH</fullName>
    </alternativeName>
    <alternativeName>
        <fullName evidence="1">ImGP synthase subunit HisH</fullName>
        <shortName evidence="1">IGPS subunit HisH</shortName>
    </alternativeName>
</protein>
<evidence type="ECO:0000255" key="1">
    <source>
        <dbReference type="HAMAP-Rule" id="MF_00278"/>
    </source>
</evidence>
<accession>Q2YQZ0</accession>
<feature type="chain" id="PRO_0000231708" description="Imidazole glycerol phosphate synthase subunit HisH">
    <location>
        <begin position="1"/>
        <end position="216"/>
    </location>
</feature>
<feature type="domain" description="Glutamine amidotransferase type-1" evidence="1">
    <location>
        <begin position="2"/>
        <end position="216"/>
    </location>
</feature>
<feature type="active site" description="Nucleophile" evidence="1">
    <location>
        <position position="88"/>
    </location>
</feature>
<feature type="active site" evidence="1">
    <location>
        <position position="196"/>
    </location>
</feature>
<feature type="active site" evidence="1">
    <location>
        <position position="198"/>
    </location>
</feature>
<sequence>MRVAIIDYGSGNLRSATKAFERAAHESGISAEIDLTCDAQRVASADRIVLPGVGAYADCRRGLDAAPGMVEALNDTVLKKARPFLGICVGMQLMSERGLEKTVTNGLGWIAGDVREMVPSDASLKIPQIGWNRIHVKHSHPIFDGIPTGDDGLHAYFVHSYMLDAKNASDVLAVTDYGGDVTAAVGRDNMVGTQFHPEKSQLLGLSLIANFLKWKP</sequence>
<dbReference type="EC" id="4.3.2.10" evidence="1"/>
<dbReference type="EC" id="3.5.1.2" evidence="1"/>
<dbReference type="EMBL" id="AM040264">
    <property type="protein sequence ID" value="CAJ12040.1"/>
    <property type="molecule type" value="Genomic_DNA"/>
</dbReference>
<dbReference type="RefSeq" id="WP_002967037.1">
    <property type="nucleotide sequence ID" value="NZ_KN046823.1"/>
</dbReference>
<dbReference type="SMR" id="Q2YQZ0"/>
<dbReference type="STRING" id="359391.BAB1_2084"/>
<dbReference type="GeneID" id="93017606"/>
<dbReference type="KEGG" id="bmf:BAB1_2084"/>
<dbReference type="PATRIC" id="fig|359391.11.peg.1318"/>
<dbReference type="HOGENOM" id="CLU_071837_2_0_5"/>
<dbReference type="PhylomeDB" id="Q2YQZ0"/>
<dbReference type="UniPathway" id="UPA00031">
    <property type="reaction ID" value="UER00010"/>
</dbReference>
<dbReference type="Proteomes" id="UP000002719">
    <property type="component" value="Chromosome I"/>
</dbReference>
<dbReference type="GO" id="GO:0005737">
    <property type="term" value="C:cytoplasm"/>
    <property type="evidence" value="ECO:0007669"/>
    <property type="project" value="UniProtKB-SubCell"/>
</dbReference>
<dbReference type="GO" id="GO:0004359">
    <property type="term" value="F:glutaminase activity"/>
    <property type="evidence" value="ECO:0007669"/>
    <property type="project" value="UniProtKB-EC"/>
</dbReference>
<dbReference type="GO" id="GO:0000107">
    <property type="term" value="F:imidazoleglycerol-phosphate synthase activity"/>
    <property type="evidence" value="ECO:0007669"/>
    <property type="project" value="UniProtKB-UniRule"/>
</dbReference>
<dbReference type="GO" id="GO:0016829">
    <property type="term" value="F:lyase activity"/>
    <property type="evidence" value="ECO:0007669"/>
    <property type="project" value="UniProtKB-KW"/>
</dbReference>
<dbReference type="GO" id="GO:0000105">
    <property type="term" value="P:L-histidine biosynthetic process"/>
    <property type="evidence" value="ECO:0007669"/>
    <property type="project" value="UniProtKB-UniRule"/>
</dbReference>
<dbReference type="CDD" id="cd01748">
    <property type="entry name" value="GATase1_IGP_Synthase"/>
    <property type="match status" value="1"/>
</dbReference>
<dbReference type="Gene3D" id="3.40.50.880">
    <property type="match status" value="1"/>
</dbReference>
<dbReference type="HAMAP" id="MF_00278">
    <property type="entry name" value="HisH"/>
    <property type="match status" value="1"/>
</dbReference>
<dbReference type="InterPro" id="IPR029062">
    <property type="entry name" value="Class_I_gatase-like"/>
</dbReference>
<dbReference type="InterPro" id="IPR017926">
    <property type="entry name" value="GATASE"/>
</dbReference>
<dbReference type="InterPro" id="IPR010139">
    <property type="entry name" value="Imidazole-glycPsynth_HisH"/>
</dbReference>
<dbReference type="NCBIfam" id="TIGR01855">
    <property type="entry name" value="IMP_synth_hisH"/>
    <property type="match status" value="1"/>
</dbReference>
<dbReference type="PANTHER" id="PTHR42701">
    <property type="entry name" value="IMIDAZOLE GLYCEROL PHOSPHATE SYNTHASE SUBUNIT HISH"/>
    <property type="match status" value="1"/>
</dbReference>
<dbReference type="PANTHER" id="PTHR42701:SF1">
    <property type="entry name" value="IMIDAZOLE GLYCEROL PHOSPHATE SYNTHASE SUBUNIT HISH"/>
    <property type="match status" value="1"/>
</dbReference>
<dbReference type="Pfam" id="PF00117">
    <property type="entry name" value="GATase"/>
    <property type="match status" value="1"/>
</dbReference>
<dbReference type="PIRSF" id="PIRSF000495">
    <property type="entry name" value="Amidotransf_hisH"/>
    <property type="match status" value="1"/>
</dbReference>
<dbReference type="SUPFAM" id="SSF52317">
    <property type="entry name" value="Class I glutamine amidotransferase-like"/>
    <property type="match status" value="1"/>
</dbReference>
<dbReference type="PROSITE" id="PS51273">
    <property type="entry name" value="GATASE_TYPE_1"/>
    <property type="match status" value="1"/>
</dbReference>
<gene>
    <name evidence="1" type="primary">hisH</name>
    <name type="ordered locus">BAB1_2084</name>
</gene>
<comment type="function">
    <text evidence="1">IGPS catalyzes the conversion of PRFAR and glutamine to IGP, AICAR and glutamate. The HisH subunit catalyzes the hydrolysis of glutamine to glutamate and ammonia as part of the synthesis of IGP and AICAR. The resulting ammonia molecule is channeled to the active site of HisF.</text>
</comment>
<comment type="catalytic activity">
    <reaction evidence="1">
        <text>5-[(5-phospho-1-deoxy-D-ribulos-1-ylimino)methylamino]-1-(5-phospho-beta-D-ribosyl)imidazole-4-carboxamide + L-glutamine = D-erythro-1-(imidazol-4-yl)glycerol 3-phosphate + 5-amino-1-(5-phospho-beta-D-ribosyl)imidazole-4-carboxamide + L-glutamate + H(+)</text>
        <dbReference type="Rhea" id="RHEA:24793"/>
        <dbReference type="ChEBI" id="CHEBI:15378"/>
        <dbReference type="ChEBI" id="CHEBI:29985"/>
        <dbReference type="ChEBI" id="CHEBI:58278"/>
        <dbReference type="ChEBI" id="CHEBI:58359"/>
        <dbReference type="ChEBI" id="CHEBI:58475"/>
        <dbReference type="ChEBI" id="CHEBI:58525"/>
        <dbReference type="EC" id="4.3.2.10"/>
    </reaction>
</comment>
<comment type="catalytic activity">
    <reaction evidence="1">
        <text>L-glutamine + H2O = L-glutamate + NH4(+)</text>
        <dbReference type="Rhea" id="RHEA:15889"/>
        <dbReference type="ChEBI" id="CHEBI:15377"/>
        <dbReference type="ChEBI" id="CHEBI:28938"/>
        <dbReference type="ChEBI" id="CHEBI:29985"/>
        <dbReference type="ChEBI" id="CHEBI:58359"/>
        <dbReference type="EC" id="3.5.1.2"/>
    </reaction>
</comment>
<comment type="pathway">
    <text evidence="1">Amino-acid biosynthesis; L-histidine biosynthesis; L-histidine from 5-phospho-alpha-D-ribose 1-diphosphate: step 5/9.</text>
</comment>
<comment type="subunit">
    <text evidence="1">Heterodimer of HisH and HisF.</text>
</comment>
<comment type="subcellular location">
    <subcellularLocation>
        <location evidence="1">Cytoplasm</location>
    </subcellularLocation>
</comment>
<name>HIS5_BRUA2</name>
<proteinExistence type="inferred from homology"/>
<reference key="1">
    <citation type="journal article" date="2005" name="Infect. Immun.">
        <title>Whole-genome analyses of speciation events in pathogenic Brucellae.</title>
        <authorList>
            <person name="Chain P.S."/>
            <person name="Comerci D.J."/>
            <person name="Tolmasky M.E."/>
            <person name="Larimer F.W."/>
            <person name="Malfatti S.A."/>
            <person name="Vergez L.M."/>
            <person name="Aguero F."/>
            <person name="Land M.L."/>
            <person name="Ugalde R.A."/>
            <person name="Garcia E."/>
        </authorList>
    </citation>
    <scope>NUCLEOTIDE SEQUENCE [LARGE SCALE GENOMIC DNA]</scope>
    <source>
        <strain>2308</strain>
    </source>
</reference>